<reference key="1">
    <citation type="submission" date="2007-03" db="EMBL/GenBank/DDBJ databases">
        <title>Genome sequence of Rhodospirillum centenum.</title>
        <authorList>
            <person name="Touchman J.W."/>
            <person name="Bauer C."/>
            <person name="Blankenship R.E."/>
        </authorList>
    </citation>
    <scope>NUCLEOTIDE SEQUENCE [LARGE SCALE GENOMIC DNA]</scope>
    <source>
        <strain>ATCC 51521 / SW</strain>
    </source>
</reference>
<comment type="function">
    <text evidence="1">Part of the high-affinity ATP-driven potassium transport (or Kdp) system, which catalyzes the hydrolysis of ATP coupled with the electrogenic transport of potassium into the cytoplasm. This subunit binds the periplasmic potassium ions and delivers the ions to the membrane domain of KdpB through an intramembrane tunnel.</text>
</comment>
<comment type="subunit">
    <text evidence="1">The system is composed of three essential subunits: KdpA, KdpB and KdpC.</text>
</comment>
<comment type="subcellular location">
    <subcellularLocation>
        <location evidence="1">Cell inner membrane</location>
        <topology evidence="1">Multi-pass membrane protein</topology>
    </subcellularLocation>
</comment>
<comment type="similarity">
    <text evidence="1">Belongs to the KdpA family.</text>
</comment>
<gene>
    <name evidence="1" type="primary">kdpA</name>
    <name type="ordered locus">RC1_0436</name>
</gene>
<dbReference type="EMBL" id="CP000613">
    <property type="protein sequence ID" value="ACI97875.1"/>
    <property type="molecule type" value="Genomic_DNA"/>
</dbReference>
<dbReference type="RefSeq" id="WP_012565667.1">
    <property type="nucleotide sequence ID" value="NC_011420.2"/>
</dbReference>
<dbReference type="SMR" id="B6IQY9"/>
<dbReference type="STRING" id="414684.RC1_0436"/>
<dbReference type="KEGG" id="rce:RC1_0436"/>
<dbReference type="eggNOG" id="COG2060">
    <property type="taxonomic scope" value="Bacteria"/>
</dbReference>
<dbReference type="HOGENOM" id="CLU_018614_3_0_5"/>
<dbReference type="OrthoDB" id="9763796at2"/>
<dbReference type="Proteomes" id="UP000001591">
    <property type="component" value="Chromosome"/>
</dbReference>
<dbReference type="GO" id="GO:0005886">
    <property type="term" value="C:plasma membrane"/>
    <property type="evidence" value="ECO:0007669"/>
    <property type="project" value="UniProtKB-SubCell"/>
</dbReference>
<dbReference type="GO" id="GO:0008556">
    <property type="term" value="F:P-type potassium transmembrane transporter activity"/>
    <property type="evidence" value="ECO:0007669"/>
    <property type="project" value="InterPro"/>
</dbReference>
<dbReference type="GO" id="GO:0030955">
    <property type="term" value="F:potassium ion binding"/>
    <property type="evidence" value="ECO:0007669"/>
    <property type="project" value="UniProtKB-UniRule"/>
</dbReference>
<dbReference type="HAMAP" id="MF_00275">
    <property type="entry name" value="KdpA"/>
    <property type="match status" value="1"/>
</dbReference>
<dbReference type="InterPro" id="IPR004623">
    <property type="entry name" value="KdpA"/>
</dbReference>
<dbReference type="NCBIfam" id="TIGR00680">
    <property type="entry name" value="kdpA"/>
    <property type="match status" value="1"/>
</dbReference>
<dbReference type="PANTHER" id="PTHR30607">
    <property type="entry name" value="POTASSIUM-TRANSPORTING ATPASE A CHAIN"/>
    <property type="match status" value="1"/>
</dbReference>
<dbReference type="PANTHER" id="PTHR30607:SF2">
    <property type="entry name" value="POTASSIUM-TRANSPORTING ATPASE POTASSIUM-BINDING SUBUNIT"/>
    <property type="match status" value="1"/>
</dbReference>
<dbReference type="Pfam" id="PF03814">
    <property type="entry name" value="KdpA"/>
    <property type="match status" value="1"/>
</dbReference>
<dbReference type="PIRSF" id="PIRSF001294">
    <property type="entry name" value="K_ATPaseA"/>
    <property type="match status" value="1"/>
</dbReference>
<protein>
    <recommendedName>
        <fullName evidence="1">Potassium-transporting ATPase potassium-binding subunit</fullName>
    </recommendedName>
    <alternativeName>
        <fullName evidence="1">ATP phosphohydrolase [potassium-transporting] A chain</fullName>
    </alternativeName>
    <alternativeName>
        <fullName evidence="1">Potassium-binding and translocating subunit A</fullName>
    </alternativeName>
    <alternativeName>
        <fullName evidence="1">Potassium-translocating ATPase A chain</fullName>
    </alternativeName>
</protein>
<proteinExistence type="inferred from homology"/>
<name>KDPA_RHOCS</name>
<feature type="chain" id="PRO_1000114696" description="Potassium-transporting ATPase potassium-binding subunit">
    <location>
        <begin position="1"/>
        <end position="573"/>
    </location>
</feature>
<feature type="transmembrane region" description="Helical" evidence="1">
    <location>
        <begin position="3"/>
        <end position="23"/>
    </location>
</feature>
<feature type="transmembrane region" description="Helical" evidence="1">
    <location>
        <begin position="65"/>
        <end position="85"/>
    </location>
</feature>
<feature type="transmembrane region" description="Helical" evidence="1">
    <location>
        <begin position="136"/>
        <end position="156"/>
    </location>
</feature>
<feature type="transmembrane region" description="Helical" evidence="1">
    <location>
        <begin position="179"/>
        <end position="199"/>
    </location>
</feature>
<feature type="transmembrane region" description="Helical" evidence="1">
    <location>
        <begin position="254"/>
        <end position="274"/>
    </location>
</feature>
<feature type="transmembrane region" description="Helical" evidence="1">
    <location>
        <begin position="286"/>
        <end position="306"/>
    </location>
</feature>
<feature type="transmembrane region" description="Helical" evidence="1">
    <location>
        <begin position="383"/>
        <end position="403"/>
    </location>
</feature>
<feature type="transmembrane region" description="Helical" evidence="1">
    <location>
        <begin position="423"/>
        <end position="443"/>
    </location>
</feature>
<feature type="transmembrane region" description="Helical" evidence="1">
    <location>
        <begin position="489"/>
        <end position="509"/>
    </location>
</feature>
<feature type="transmembrane region" description="Helical" evidence="1">
    <location>
        <begin position="531"/>
        <end position="551"/>
    </location>
</feature>
<evidence type="ECO:0000255" key="1">
    <source>
        <dbReference type="HAMAP-Rule" id="MF_00275"/>
    </source>
</evidence>
<keyword id="KW-0997">Cell inner membrane</keyword>
<keyword id="KW-1003">Cell membrane</keyword>
<keyword id="KW-0406">Ion transport</keyword>
<keyword id="KW-0472">Membrane</keyword>
<keyword id="KW-0630">Potassium</keyword>
<keyword id="KW-0633">Potassium transport</keyword>
<keyword id="KW-1185">Reference proteome</keyword>
<keyword id="KW-0812">Transmembrane</keyword>
<keyword id="KW-1133">Transmembrane helix</keyword>
<keyword id="KW-0813">Transport</keyword>
<accession>B6IQY9</accession>
<sequence length="573" mass="59937">MTAEGLLQILLYLGLLAAVTPLLGRYMARVFEGERTLPGIVLGPLERGLYRIAGIDPAREQHWTGYTLALLSFNLLGLLLLYALLRFQALLPLNPAELGPVGPDLAFNTAVSFTTNTNWQSYGGETTLSYLSQMLGLTVQNFVSAATGIAVAVALIRGFARRAGKTVGNFWADLVRATLYVLLPLAFLGALVLVWQGVPQNFDAYVTATTLEGGNQVLAQGPAASQIAIKQLGSNGGGFFNVNSAHPYENPTALTNLLESFYLLMIAAALIYSFGRMVGDTRQGRALWTAVFILFVAGLAVTWWAEAQGNPAVTALGVETTDGNMEGKEVRYGTALSALWAVATTAASNGSVNAMHDSFMPLGGMVPMLNMMLGEVIYGGVGAGLYGLLVFVILAVFIAGLMVGRTPEYLGKKIEAREIKLAVIAVLVFPLGILGGAALTTVVPQMLASVQDPGPHGLSEILYAYTSATGNNGSAFAGFGANTPWHNTGLGLAMLLGRFAVIVPTLAIAGSLVAKRAAPAGPGTLPTHGTLFITLLIATILIVGGLTFFPALALGPIAEHLSLTAGTLFGAVP</sequence>
<organism>
    <name type="scientific">Rhodospirillum centenum (strain ATCC 51521 / SW)</name>
    <dbReference type="NCBI Taxonomy" id="414684"/>
    <lineage>
        <taxon>Bacteria</taxon>
        <taxon>Pseudomonadati</taxon>
        <taxon>Pseudomonadota</taxon>
        <taxon>Alphaproteobacteria</taxon>
        <taxon>Rhodospirillales</taxon>
        <taxon>Rhodospirillaceae</taxon>
        <taxon>Rhodospirillum</taxon>
    </lineage>
</organism>